<feature type="chain" id="PRO_0000412242" description="(S)-beta-macrocarpene synthase">
    <location>
        <begin position="1"/>
        <end position="548"/>
    </location>
</feature>
<feature type="short sequence motif" description="DDXXD motif" evidence="1">
    <location>
        <begin position="302"/>
        <end position="306"/>
    </location>
</feature>
<feature type="binding site" evidence="2">
    <location>
        <position position="302"/>
    </location>
    <ligand>
        <name>Mg(2+)</name>
        <dbReference type="ChEBI" id="CHEBI:18420"/>
        <label>1</label>
    </ligand>
</feature>
<feature type="binding site" evidence="2">
    <location>
        <position position="302"/>
    </location>
    <ligand>
        <name>Mg(2+)</name>
        <dbReference type="ChEBI" id="CHEBI:18420"/>
        <label>2</label>
    </ligand>
</feature>
<feature type="binding site" evidence="1">
    <location>
        <position position="302"/>
    </location>
    <ligand>
        <name>substrate</name>
    </ligand>
</feature>
<feature type="binding site" evidence="2">
    <location>
        <position position="306"/>
    </location>
    <ligand>
        <name>Mg(2+)</name>
        <dbReference type="ChEBI" id="CHEBI:18420"/>
        <label>1</label>
    </ligand>
</feature>
<feature type="binding site" evidence="2">
    <location>
        <position position="306"/>
    </location>
    <ligand>
        <name>Mg(2+)</name>
        <dbReference type="ChEBI" id="CHEBI:18420"/>
        <label>2</label>
    </ligand>
</feature>
<feature type="binding site" evidence="1">
    <location>
        <position position="306"/>
    </location>
    <ligand>
        <name>substrate</name>
    </ligand>
</feature>
<feature type="binding site" evidence="1">
    <location>
        <position position="443"/>
    </location>
    <ligand>
        <name>substrate</name>
    </ligand>
</feature>
<feature type="binding site" evidence="2">
    <location>
        <position position="446"/>
    </location>
    <ligand>
        <name>Mg(2+)</name>
        <dbReference type="ChEBI" id="CHEBI:18420"/>
        <label>3</label>
    </ligand>
</feature>
<feature type="binding site" evidence="1">
    <location>
        <position position="446"/>
    </location>
    <ligand>
        <name>substrate</name>
    </ligand>
</feature>
<feature type="binding site" evidence="2">
    <location>
        <position position="450"/>
    </location>
    <ligand>
        <name>Mg(2+)</name>
        <dbReference type="ChEBI" id="CHEBI:18420"/>
        <label>3</label>
    </ligand>
</feature>
<feature type="binding site" evidence="2">
    <location>
        <position position="454"/>
    </location>
    <ligand>
        <name>Mg(2+)</name>
        <dbReference type="ChEBI" id="CHEBI:18420"/>
        <label>3</label>
    </ligand>
</feature>
<feature type="mutagenesis site" description="Decreased activity and loss of production of (S)-beta-macrocarpene." evidence="6">
    <original>Y</original>
    <variation>F</variation>
    <location>
        <position position="522"/>
    </location>
</feature>
<feature type="mutagenesis site" description="Loss of activity." evidence="6">
    <original>D</original>
    <variation>N</variation>
    <location>
        <position position="526"/>
    </location>
</feature>
<proteinExistence type="evidence at protein level"/>
<dbReference type="EC" id="5.5.1.17" evidence="6"/>
<dbReference type="EC" id="4.2.3.113" evidence="6"/>
<dbReference type="EC" id="4.2.3.55" evidence="6"/>
<dbReference type="EC" id="4.2.3.15" evidence="6"/>
<dbReference type="EC" id="4.2.3.16" evidence="6"/>
<dbReference type="EC" id="4.2.3.25" evidence="6"/>
<dbReference type="EMBL" id="AY647254">
    <property type="protein sequence ID" value="AAT70086.1"/>
    <property type="molecule type" value="mRNA"/>
</dbReference>
<dbReference type="EMBL" id="EU716166">
    <property type="protein sequence ID" value="ACF58240.1"/>
    <property type="molecule type" value="mRNA"/>
</dbReference>
<dbReference type="EMBL" id="CM000786">
    <property type="protein sequence ID" value="AQK40803.1"/>
    <property type="molecule type" value="Genomic_DNA"/>
</dbReference>
<dbReference type="RefSeq" id="NP_001105950.1">
    <property type="nucleotide sequence ID" value="NM_001112480.1"/>
</dbReference>
<dbReference type="RefSeq" id="NP_001307938.1">
    <property type="nucleotide sequence ID" value="NM_001321009.1"/>
</dbReference>
<dbReference type="SMR" id="Q1EG72"/>
<dbReference type="STRING" id="4577.Q1EG72"/>
<dbReference type="PaxDb" id="4577-GRMZM2G127087_P03"/>
<dbReference type="GeneID" id="103641097"/>
<dbReference type="KEGG" id="zma:103641097"/>
<dbReference type="MaizeGDB" id="1219887"/>
<dbReference type="eggNOG" id="ENOG502QUCN">
    <property type="taxonomic scope" value="Eukaryota"/>
</dbReference>
<dbReference type="InParanoid" id="Q1EG72"/>
<dbReference type="OMA" id="NGACHEP"/>
<dbReference type="OrthoDB" id="1877784at2759"/>
<dbReference type="BioCyc" id="MetaCyc:MONOMER-124406"/>
<dbReference type="BRENDA" id="4.2.3.55">
    <property type="organism ID" value="6752"/>
</dbReference>
<dbReference type="BRENDA" id="5.5.1.17">
    <property type="organism ID" value="6752"/>
</dbReference>
<dbReference type="UniPathway" id="UPA00213"/>
<dbReference type="Proteomes" id="UP000007305">
    <property type="component" value="Unplaced"/>
</dbReference>
<dbReference type="ExpressionAtlas" id="Q1EG72">
    <property type="expression patterns" value="baseline and differential"/>
</dbReference>
<dbReference type="GO" id="GO:0005737">
    <property type="term" value="C:cytoplasm"/>
    <property type="evidence" value="ECO:0007669"/>
    <property type="project" value="UniProtKB-SubCell"/>
</dbReference>
<dbReference type="GO" id="GO:0050552">
    <property type="term" value="F:(4S)-limonene synthase activity"/>
    <property type="evidence" value="ECO:0007669"/>
    <property type="project" value="UniProtKB-EC"/>
</dbReference>
<dbReference type="GO" id="GO:0016853">
    <property type="term" value="F:isomerase activity"/>
    <property type="evidence" value="ECO:0007669"/>
    <property type="project" value="UniProtKB-KW"/>
</dbReference>
<dbReference type="GO" id="GO:0000287">
    <property type="term" value="F:magnesium ion binding"/>
    <property type="evidence" value="ECO:0007669"/>
    <property type="project" value="InterPro"/>
</dbReference>
<dbReference type="GO" id="GO:0050551">
    <property type="term" value="F:myrcene synthase activity"/>
    <property type="evidence" value="ECO:0007669"/>
    <property type="project" value="UniProtKB-EC"/>
</dbReference>
<dbReference type="GO" id="GO:0034007">
    <property type="term" value="F:S-linalool synthase activity"/>
    <property type="evidence" value="ECO:0007669"/>
    <property type="project" value="UniProtKB-EC"/>
</dbReference>
<dbReference type="GO" id="GO:0010333">
    <property type="term" value="F:terpene synthase activity"/>
    <property type="evidence" value="ECO:0000314"/>
    <property type="project" value="UniProtKB"/>
</dbReference>
<dbReference type="GO" id="GO:0050832">
    <property type="term" value="P:defense response to fungus"/>
    <property type="evidence" value="ECO:0000270"/>
    <property type="project" value="UniProtKB"/>
</dbReference>
<dbReference type="GO" id="GO:0016102">
    <property type="term" value="P:diterpenoid biosynthetic process"/>
    <property type="evidence" value="ECO:0007669"/>
    <property type="project" value="InterPro"/>
</dbReference>
<dbReference type="GO" id="GO:0016114">
    <property type="term" value="P:terpenoid biosynthetic process"/>
    <property type="evidence" value="ECO:0000314"/>
    <property type="project" value="UniProtKB"/>
</dbReference>
<dbReference type="CDD" id="cd00684">
    <property type="entry name" value="Terpene_cyclase_plant_C1"/>
    <property type="match status" value="1"/>
</dbReference>
<dbReference type="FunFam" id="1.10.600.10:FF:000007">
    <property type="entry name" value="Isoprene synthase, chloroplastic"/>
    <property type="match status" value="1"/>
</dbReference>
<dbReference type="Gene3D" id="1.10.600.10">
    <property type="entry name" value="Farnesyl Diphosphate Synthase"/>
    <property type="match status" value="1"/>
</dbReference>
<dbReference type="Gene3D" id="1.50.10.130">
    <property type="entry name" value="Terpene synthase, N-terminal domain"/>
    <property type="match status" value="1"/>
</dbReference>
<dbReference type="InterPro" id="IPR008949">
    <property type="entry name" value="Isoprenoid_synthase_dom_sf"/>
</dbReference>
<dbReference type="InterPro" id="IPR034741">
    <property type="entry name" value="Terpene_cyclase-like_1_C"/>
</dbReference>
<dbReference type="InterPro" id="IPR044814">
    <property type="entry name" value="Terpene_cyclase_plant_C1"/>
</dbReference>
<dbReference type="InterPro" id="IPR001906">
    <property type="entry name" value="Terpene_synth_N"/>
</dbReference>
<dbReference type="InterPro" id="IPR036965">
    <property type="entry name" value="Terpene_synth_N_sf"/>
</dbReference>
<dbReference type="InterPro" id="IPR050148">
    <property type="entry name" value="Terpene_synthase-like"/>
</dbReference>
<dbReference type="InterPro" id="IPR005630">
    <property type="entry name" value="Terpene_synthase_metal-bd"/>
</dbReference>
<dbReference type="InterPro" id="IPR008930">
    <property type="entry name" value="Terpenoid_cyclase/PrenylTrfase"/>
</dbReference>
<dbReference type="PANTHER" id="PTHR31225:SF93">
    <property type="entry name" value="ALPHA-HUMULENE_(-)-(E)-BETA-CARYOPHYLLENE SYNTHASE"/>
    <property type="match status" value="1"/>
</dbReference>
<dbReference type="PANTHER" id="PTHR31225">
    <property type="entry name" value="OS04G0344100 PROTEIN-RELATED"/>
    <property type="match status" value="1"/>
</dbReference>
<dbReference type="Pfam" id="PF01397">
    <property type="entry name" value="Terpene_synth"/>
    <property type="match status" value="1"/>
</dbReference>
<dbReference type="Pfam" id="PF03936">
    <property type="entry name" value="Terpene_synth_C"/>
    <property type="match status" value="1"/>
</dbReference>
<dbReference type="SFLD" id="SFLDS00005">
    <property type="entry name" value="Isoprenoid_Synthase_Type_I"/>
    <property type="match status" value="1"/>
</dbReference>
<dbReference type="SFLD" id="SFLDG01019">
    <property type="entry name" value="Terpene_Cyclase_Like_1_C_Termi"/>
    <property type="match status" value="1"/>
</dbReference>
<dbReference type="SUPFAM" id="SSF48239">
    <property type="entry name" value="Terpenoid cyclases/Protein prenyltransferases"/>
    <property type="match status" value="1"/>
</dbReference>
<dbReference type="SUPFAM" id="SSF48576">
    <property type="entry name" value="Terpenoid synthases"/>
    <property type="match status" value="1"/>
</dbReference>
<name>TPS11_MAIZE</name>
<sequence>MAAPTLTTDGPRLGQQEMKKMSPSFHPTLWGDFFLSYEAPTEAQEAEMRQRAEVLREEVRNMIKGSHDVPEIVDLIITLQRLNLDYHYEDEINEKLAVVYNSNYDGGNLDLVSRRFYLLRKCGYHVSSDVFLNFKDQYGNFIEVDTRSLLSLYNAAYLRIHGETVLDEAISFTTRCLQDRLEHLESPIAEEVSSALDTPLFRRVGTLEMKDYIPIYEKDAKQNKSILEFAKLNFNLLQLLYSSELKECTTWWKELRVESNLSFVRDRIVEVYFWMSGGCYDPQYSHSRIILTKIVAFITILDDTLDSHANSYESMQLAEAVERWDESAVSLLPEYMKDFYMYLLKTFSSFENELGPDKSYRVFYLKEAVKELVREYTKEIKWRDEDYVPKTLKEHLKVSLISIGGTLVLCSAFVGMGDVVTKKIMEWVMSDAELVKSFGIFVRLSNDIVSTKREQREKHCVSTVQCYMKQHELTMDEACEQIKELTEDSWKFMIEQGLALKEYPIIVPRTVLEFARTVDYMYKEADKYTVSHTIKDMLTSLYVKPVLM</sequence>
<protein>
    <recommendedName>
        <fullName evidence="9">(S)-beta-macrocarpene synthase</fullName>
        <ecNumber evidence="6">5.5.1.17</ecNumber>
    </recommendedName>
    <alternativeName>
        <fullName evidence="9">Alpha-terpinolene synthase</fullName>
        <ecNumber evidence="6">4.2.3.113</ecNumber>
    </alternativeName>
    <alternativeName>
        <fullName evidence="9">Beta-bisabolene synthase</fullName>
        <ecNumber evidence="6">4.2.3.55</ecNumber>
    </alternativeName>
    <alternativeName>
        <fullName evidence="9">Beta-myrcene synthase</fullName>
        <ecNumber evidence="6">4.2.3.15</ecNumber>
    </alternativeName>
    <alternativeName>
        <fullName evidence="9">Limonene synthase</fullName>
        <ecNumber evidence="6">4.2.3.16</ecNumber>
    </alternativeName>
    <alternativeName>
        <fullName evidence="9">Linalool synthase</fullName>
        <ecNumber evidence="6">4.2.3.25</ecNumber>
    </alternativeName>
    <alternativeName>
        <fullName evidence="9">Terpene synthase 11</fullName>
    </alternativeName>
</protein>
<keyword id="KW-0963">Cytoplasm</keyword>
<keyword id="KW-0413">Isomerase</keyword>
<keyword id="KW-0456">Lyase</keyword>
<keyword id="KW-0460">Magnesium</keyword>
<keyword id="KW-0464">Manganese</keyword>
<keyword id="KW-0479">Metal-binding</keyword>
<keyword id="KW-0611">Plant defense</keyword>
<keyword id="KW-1185">Reference proteome</keyword>
<evidence type="ECO:0000250" key="1">
    <source>
        <dbReference type="UniProtKB" id="A0A1C9J6A7"/>
    </source>
</evidence>
<evidence type="ECO:0000250" key="2">
    <source>
        <dbReference type="UniProtKB" id="Q40577"/>
    </source>
</evidence>
<evidence type="ECO:0000250" key="3">
    <source>
        <dbReference type="UniProtKB" id="Q6JD73"/>
    </source>
</evidence>
<evidence type="ECO:0000250" key="4">
    <source>
        <dbReference type="UniProtKB" id="Q6Q3H2"/>
    </source>
</evidence>
<evidence type="ECO:0000269" key="5">
    <source>
    </source>
</evidence>
<evidence type="ECO:0000269" key="6">
    <source>
    </source>
</evidence>
<evidence type="ECO:0000269" key="7">
    <source>
    </source>
</evidence>
<evidence type="ECO:0000303" key="8">
    <source>
    </source>
</evidence>
<evidence type="ECO:0000303" key="9">
    <source>
    </source>
</evidence>
<evidence type="ECO:0000305" key="10"/>
<evidence type="ECO:0000305" key="11">
    <source>
    </source>
</evidence>
<evidence type="ECO:0000305" key="12">
    <source>
    </source>
</evidence>
<evidence type="ECO:0000312" key="13">
    <source>
        <dbReference type="EMBL" id="AQK40803.1"/>
    </source>
</evidence>
<reference key="1">
    <citation type="journal article" date="2005" name="Plant Physiol.">
        <title>Dissecting defense-related and developmental transcriptional responses of maize during Ustilago maydis infection and subsequent tumor formation.</title>
        <authorList>
            <person name="Basse C.W."/>
        </authorList>
    </citation>
    <scope>NUCLEOTIDE SEQUENCE [MRNA]</scope>
    <scope>INDUCTION BY FUNGI</scope>
    <source>
        <strain>cv. Golden Bantam early</strain>
    </source>
</reference>
<reference key="2">
    <citation type="journal article" date="2008" name="J. Biol. Chem.">
        <title>Protonation of a neutral (S)-beta-bisabolene intermediate is involved in (S)-beta-macrocarpene formation by the maize sesquiterpene synthases TPS6 and TPS11.</title>
        <authorList>
            <person name="Koellner T.G."/>
            <person name="Schnee C."/>
            <person name="Li S."/>
            <person name="Svatos A."/>
            <person name="Schneider B."/>
            <person name="Gershenzon J."/>
            <person name="Degenhardt J."/>
        </authorList>
    </citation>
    <scope>NUCLEOTIDE SEQUENCE [MRNA]</scope>
    <scope>FUNCTION</scope>
    <scope>CATALYTIC ACTIVITY</scope>
    <scope>MUTAGENESIS OF TYR-522 AND ASP-526</scope>
    <scope>INDUCTION BY HERBIVORY</scope>
    <scope>TISSUE SPECIFICITY</scope>
    <source>
        <strain>cv. B73</strain>
    </source>
</reference>
<reference key="3">
    <citation type="journal article" date="2009" name="Science">
        <title>The B73 maize genome: complexity, diversity, and dynamics.</title>
        <authorList>
            <person name="Schnable P.S."/>
            <person name="Ware D."/>
            <person name="Fulton R.S."/>
            <person name="Stein J.C."/>
            <person name="Wei F."/>
            <person name="Pasternak S."/>
            <person name="Liang C."/>
            <person name="Zhang J."/>
            <person name="Fulton L."/>
            <person name="Graves T.A."/>
            <person name="Minx P."/>
            <person name="Reily A.D."/>
            <person name="Courtney L."/>
            <person name="Kruchowski S.S."/>
            <person name="Tomlinson C."/>
            <person name="Strong C."/>
            <person name="Delehaunty K."/>
            <person name="Fronick C."/>
            <person name="Courtney B."/>
            <person name="Rock S.M."/>
            <person name="Belter E."/>
            <person name="Du F."/>
            <person name="Kim K."/>
            <person name="Abbott R.M."/>
            <person name="Cotton M."/>
            <person name="Levy A."/>
            <person name="Marchetto P."/>
            <person name="Ochoa K."/>
            <person name="Jackson S.M."/>
            <person name="Gillam B."/>
            <person name="Chen W."/>
            <person name="Yan L."/>
            <person name="Higginbotham J."/>
            <person name="Cardenas M."/>
            <person name="Waligorski J."/>
            <person name="Applebaum E."/>
            <person name="Phelps L."/>
            <person name="Falcone J."/>
            <person name="Kanchi K."/>
            <person name="Thane T."/>
            <person name="Scimone A."/>
            <person name="Thane N."/>
            <person name="Henke J."/>
            <person name="Wang T."/>
            <person name="Ruppert J."/>
            <person name="Shah N."/>
            <person name="Rotter K."/>
            <person name="Hodges J."/>
            <person name="Ingenthron E."/>
            <person name="Cordes M."/>
            <person name="Kohlberg S."/>
            <person name="Sgro J."/>
            <person name="Delgado B."/>
            <person name="Mead K."/>
            <person name="Chinwalla A."/>
            <person name="Leonard S."/>
            <person name="Crouse K."/>
            <person name="Collura K."/>
            <person name="Kudrna D."/>
            <person name="Currie J."/>
            <person name="He R."/>
            <person name="Angelova A."/>
            <person name="Rajasekar S."/>
            <person name="Mueller T."/>
            <person name="Lomeli R."/>
            <person name="Scara G."/>
            <person name="Ko A."/>
            <person name="Delaney K."/>
            <person name="Wissotski M."/>
            <person name="Lopez G."/>
            <person name="Campos D."/>
            <person name="Braidotti M."/>
            <person name="Ashley E."/>
            <person name="Golser W."/>
            <person name="Kim H."/>
            <person name="Lee S."/>
            <person name="Lin J."/>
            <person name="Dujmic Z."/>
            <person name="Kim W."/>
            <person name="Talag J."/>
            <person name="Zuccolo A."/>
            <person name="Fan C."/>
            <person name="Sebastian A."/>
            <person name="Kramer M."/>
            <person name="Spiegel L."/>
            <person name="Nascimento L."/>
            <person name="Zutavern T."/>
            <person name="Miller B."/>
            <person name="Ambroise C."/>
            <person name="Muller S."/>
            <person name="Spooner W."/>
            <person name="Narechania A."/>
            <person name="Ren L."/>
            <person name="Wei S."/>
            <person name="Kumari S."/>
            <person name="Faga B."/>
            <person name="Levy M.J."/>
            <person name="McMahan L."/>
            <person name="Van Buren P."/>
            <person name="Vaughn M.W."/>
            <person name="Ying K."/>
            <person name="Yeh C.-T."/>
            <person name="Emrich S.J."/>
            <person name="Jia Y."/>
            <person name="Kalyanaraman A."/>
            <person name="Hsia A.-P."/>
            <person name="Barbazuk W.B."/>
            <person name="Baucom R.S."/>
            <person name="Brutnell T.P."/>
            <person name="Carpita N.C."/>
            <person name="Chaparro C."/>
            <person name="Chia J.-M."/>
            <person name="Deragon J.-M."/>
            <person name="Estill J.C."/>
            <person name="Fu Y."/>
            <person name="Jeddeloh J.A."/>
            <person name="Han Y."/>
            <person name="Lee H."/>
            <person name="Li P."/>
            <person name="Lisch D.R."/>
            <person name="Liu S."/>
            <person name="Liu Z."/>
            <person name="Nagel D.H."/>
            <person name="McCann M.C."/>
            <person name="SanMiguel P."/>
            <person name="Myers A.M."/>
            <person name="Nettleton D."/>
            <person name="Nguyen J."/>
            <person name="Penning B.W."/>
            <person name="Ponnala L."/>
            <person name="Schneider K.L."/>
            <person name="Schwartz D.C."/>
            <person name="Sharma A."/>
            <person name="Soderlund C."/>
            <person name="Springer N.M."/>
            <person name="Sun Q."/>
            <person name="Wang H."/>
            <person name="Waterman M."/>
            <person name="Westerman R."/>
            <person name="Wolfgruber T.K."/>
            <person name="Yang L."/>
            <person name="Yu Y."/>
            <person name="Zhang L."/>
            <person name="Zhou S."/>
            <person name="Zhu Q."/>
            <person name="Bennetzen J.L."/>
            <person name="Dawe R.K."/>
            <person name="Jiang J."/>
            <person name="Jiang N."/>
            <person name="Presting G.G."/>
            <person name="Wessler S.R."/>
            <person name="Aluru S."/>
            <person name="Martienssen R.A."/>
            <person name="Clifton S.W."/>
            <person name="McCombie W.R."/>
            <person name="Wing R.A."/>
            <person name="Wilson R.K."/>
        </authorList>
    </citation>
    <scope>NUCLEOTIDE SEQUENCE [LARGE SCALE GENOMIC DNA]</scope>
    <source>
        <strain>cv. B73</strain>
        <tissue>Seedling</tissue>
    </source>
</reference>
<reference key="4">
    <citation type="journal article" date="2017" name="Plant Physiol.">
        <title>Selinene volatiles are essential precursors for maize defense promoting fungal pathogen resistance.</title>
        <authorList>
            <person name="Ding Y."/>
            <person name="Huffaker A."/>
            <person name="Koellner T.G."/>
            <person name="Weckwerth P."/>
            <person name="Robert C.A.M."/>
            <person name="Spencer J.L."/>
            <person name="Lipka A.E."/>
            <person name="Schmelz E.A."/>
        </authorList>
    </citation>
    <scope>INDUCTION BY FUNGUS</scope>
</reference>
<reference key="5">
    <citation type="journal article" date="2019" name="Planta">
        <title>Biosynthesis and function of terpenoid defense compounds in maize (Zea mays).</title>
        <authorList>
            <person name="Block A.K."/>
            <person name="Vaughan M.M."/>
            <person name="Schmelz E.A."/>
            <person name="Christensen S.A."/>
        </authorList>
    </citation>
    <scope>REVIEW</scope>
</reference>
<gene>
    <name evidence="9" type="primary">TPS11</name>
    <name evidence="8" type="synonym">UMI3</name>
    <name evidence="13" type="ORF">ZEAMMB73_Zm00001d024210</name>
</gene>
<organism>
    <name type="scientific">Zea mays</name>
    <name type="common">Maize</name>
    <dbReference type="NCBI Taxonomy" id="4577"/>
    <lineage>
        <taxon>Eukaryota</taxon>
        <taxon>Viridiplantae</taxon>
        <taxon>Streptophyta</taxon>
        <taxon>Embryophyta</taxon>
        <taxon>Tracheophyta</taxon>
        <taxon>Spermatophyta</taxon>
        <taxon>Magnoliopsida</taxon>
        <taxon>Liliopsida</taxon>
        <taxon>Poales</taxon>
        <taxon>Poaceae</taxon>
        <taxon>PACMAD clade</taxon>
        <taxon>Panicoideae</taxon>
        <taxon>Andropogonodae</taxon>
        <taxon>Andropogoneae</taxon>
        <taxon>Tripsacinae</taxon>
        <taxon>Zea</taxon>
    </lineage>
</organism>
<comment type="function">
    <text evidence="6">Involved in the biosynthesis of the bicyclic sesquiterpene (S)-beta-macrocarpene. Can use both geranyl diphosphate and farnesyl diphosphate as substrate, but not geranylgeranyl diphosphate. Produces mainly (S)-beta-macrocarpene, but also smaller amounts of beta-bisabolene and (E)-beta-farnesene when used with farnesyl diphosphate as substrate. In the presence of geranyl diphosphate, produces the acyclic monoterpenes beta-myrcene and linalool along with minor amounts of the cyclic compounds limonene, alpha-thujene, sabinene and alpha-terpinolene. May be involved in plant defense.</text>
</comment>
<comment type="catalytic activity">
    <reaction evidence="6">
        <text>(S)-beta-bisabolene = (S)-beta-macrocarpene</text>
        <dbReference type="Rhea" id="RHEA:28282"/>
        <dbReference type="ChEBI" id="CHEBI:49263"/>
        <dbReference type="ChEBI" id="CHEBI:61344"/>
        <dbReference type="EC" id="5.5.1.17"/>
    </reaction>
    <physiologicalReaction direction="left-to-right" evidence="6">
        <dbReference type="Rhea" id="RHEA:28283"/>
    </physiologicalReaction>
</comment>
<comment type="catalytic activity">
    <reaction evidence="6">
        <text>(2E,6E)-farnesyl diphosphate = (S)-beta-bisabolene + diphosphate</text>
        <dbReference type="Rhea" id="RHEA:28266"/>
        <dbReference type="ChEBI" id="CHEBI:33019"/>
        <dbReference type="ChEBI" id="CHEBI:49263"/>
        <dbReference type="ChEBI" id="CHEBI:175763"/>
        <dbReference type="EC" id="4.2.3.55"/>
    </reaction>
    <physiologicalReaction direction="left-to-right" evidence="6">
        <dbReference type="Rhea" id="RHEA:28267"/>
    </physiologicalReaction>
</comment>
<comment type="catalytic activity">
    <reaction evidence="6">
        <text>(2E)-geranyl diphosphate = (4S)-limonene + diphosphate</text>
        <dbReference type="Rhea" id="RHEA:12869"/>
        <dbReference type="ChEBI" id="CHEBI:15383"/>
        <dbReference type="ChEBI" id="CHEBI:33019"/>
        <dbReference type="ChEBI" id="CHEBI:58057"/>
        <dbReference type="EC" id="4.2.3.16"/>
    </reaction>
    <physiologicalReaction direction="left-to-right" evidence="6">
        <dbReference type="Rhea" id="RHEA:12870"/>
    </physiologicalReaction>
</comment>
<comment type="catalytic activity">
    <reaction evidence="6">
        <text>(2E)-geranyl diphosphate = beta-myrcene + diphosphate</text>
        <dbReference type="Rhea" id="RHEA:16965"/>
        <dbReference type="ChEBI" id="CHEBI:17221"/>
        <dbReference type="ChEBI" id="CHEBI:33019"/>
        <dbReference type="ChEBI" id="CHEBI:58057"/>
        <dbReference type="EC" id="4.2.3.15"/>
    </reaction>
    <physiologicalReaction direction="left-to-right" evidence="6">
        <dbReference type="Rhea" id="RHEA:16966"/>
    </physiologicalReaction>
</comment>
<comment type="catalytic activity">
    <reaction evidence="6">
        <text>(2E)-geranyl diphosphate = terpinolene + diphosphate</text>
        <dbReference type="Rhea" id="RHEA:25500"/>
        <dbReference type="ChEBI" id="CHEBI:9457"/>
        <dbReference type="ChEBI" id="CHEBI:33019"/>
        <dbReference type="ChEBI" id="CHEBI:58057"/>
        <dbReference type="EC" id="4.2.3.113"/>
    </reaction>
    <physiologicalReaction direction="left-to-right" evidence="6">
        <dbReference type="Rhea" id="RHEA:25501"/>
    </physiologicalReaction>
</comment>
<comment type="catalytic activity">
    <reaction evidence="6">
        <text>(2E)-geranyl diphosphate + H2O = (S)-linalool + diphosphate</text>
        <dbReference type="Rhea" id="RHEA:24116"/>
        <dbReference type="ChEBI" id="CHEBI:98"/>
        <dbReference type="ChEBI" id="CHEBI:15377"/>
        <dbReference type="ChEBI" id="CHEBI:33019"/>
        <dbReference type="ChEBI" id="CHEBI:58057"/>
        <dbReference type="EC" id="4.2.3.25"/>
    </reaction>
    <physiologicalReaction direction="left-to-right" evidence="6">
        <dbReference type="Rhea" id="RHEA:24117"/>
    </physiologicalReaction>
</comment>
<comment type="cofactor">
    <cofactor evidence="11">
        <name>Mg(2+)</name>
        <dbReference type="ChEBI" id="CHEBI:18420"/>
    </cofactor>
    <cofactor evidence="11">
        <name>Mn(2+)</name>
        <dbReference type="ChEBI" id="CHEBI:29035"/>
    </cofactor>
    <text evidence="11">Binds 3 Mg(2+) or Mn(2+) ions per subunit.</text>
</comment>
<comment type="pathway">
    <text evidence="12">Secondary metabolite biosynthesis; terpenoid biosynthesis.</text>
</comment>
<comment type="subunit">
    <text evidence="3">Monomer.</text>
</comment>
<comment type="subcellular location">
    <subcellularLocation>
        <location evidence="4">Cytoplasm</location>
    </subcellularLocation>
</comment>
<comment type="tissue specificity">
    <text evidence="6">Expressed in roots. Not detected in leaves, unless damaged by herbivory or infected by fungi.</text>
</comment>
<comment type="induction">
    <text evidence="5 6 7">Up-regulated by herbivory and fungi (e.g. Fusarium spp., C.heterostrophus, F.verticillioides, R.microsporus and A.parasiticus).</text>
</comment>
<comment type="domain">
    <text evidence="1">The Asp-Asp-Xaa-Xaa-Asp/Glu (DDXXD/E) motif is important for the catalytic activity, presumably through binding to Mg(2+).</text>
</comment>
<comment type="miscellaneous">
    <text>Tyr-522 is involved in the initial isomerization of the (E,E)-nerolidyl cation to its (Z,E)-isomer.</text>
</comment>
<comment type="similarity">
    <text evidence="10">Belongs to the terpene synthase family.</text>
</comment>
<accession>Q1EG72</accession>
<accession>A0A1Q0XLC1</accession>